<accession>Q2YQW4</accession>
<dbReference type="EC" id="5.3.1.24" evidence="1"/>
<dbReference type="EMBL" id="AM040264">
    <property type="protein sequence ID" value="CAJ12069.1"/>
    <property type="molecule type" value="Genomic_DNA"/>
</dbReference>
<dbReference type="RefSeq" id="WP_002965175.1">
    <property type="nucleotide sequence ID" value="NZ_KN046823.1"/>
</dbReference>
<dbReference type="SMR" id="Q2YQW4"/>
<dbReference type="STRING" id="359391.BAB1_2113"/>
<dbReference type="KEGG" id="bmf:BAB1_2113"/>
<dbReference type="PATRIC" id="fig|359391.11.peg.1344"/>
<dbReference type="HOGENOM" id="CLU_076364_1_1_5"/>
<dbReference type="PhylomeDB" id="Q2YQW4"/>
<dbReference type="UniPathway" id="UPA00035">
    <property type="reaction ID" value="UER00042"/>
</dbReference>
<dbReference type="Proteomes" id="UP000002719">
    <property type="component" value="Chromosome I"/>
</dbReference>
<dbReference type="GO" id="GO:0004640">
    <property type="term" value="F:phosphoribosylanthranilate isomerase activity"/>
    <property type="evidence" value="ECO:0007669"/>
    <property type="project" value="UniProtKB-UniRule"/>
</dbReference>
<dbReference type="GO" id="GO:0000162">
    <property type="term" value="P:L-tryptophan biosynthetic process"/>
    <property type="evidence" value="ECO:0007669"/>
    <property type="project" value="UniProtKB-UniRule"/>
</dbReference>
<dbReference type="CDD" id="cd00405">
    <property type="entry name" value="PRAI"/>
    <property type="match status" value="1"/>
</dbReference>
<dbReference type="Gene3D" id="3.20.20.70">
    <property type="entry name" value="Aldolase class I"/>
    <property type="match status" value="1"/>
</dbReference>
<dbReference type="HAMAP" id="MF_00135">
    <property type="entry name" value="PRAI"/>
    <property type="match status" value="1"/>
</dbReference>
<dbReference type="InterPro" id="IPR013785">
    <property type="entry name" value="Aldolase_TIM"/>
</dbReference>
<dbReference type="InterPro" id="IPR001240">
    <property type="entry name" value="PRAI_dom"/>
</dbReference>
<dbReference type="InterPro" id="IPR011060">
    <property type="entry name" value="RibuloseP-bd_barrel"/>
</dbReference>
<dbReference type="InterPro" id="IPR044643">
    <property type="entry name" value="TrpF_fam"/>
</dbReference>
<dbReference type="NCBIfam" id="NF002295">
    <property type="entry name" value="PRK01222.1-1"/>
    <property type="match status" value="1"/>
</dbReference>
<dbReference type="PANTHER" id="PTHR42894">
    <property type="entry name" value="N-(5'-PHOSPHORIBOSYL)ANTHRANILATE ISOMERASE"/>
    <property type="match status" value="1"/>
</dbReference>
<dbReference type="PANTHER" id="PTHR42894:SF1">
    <property type="entry name" value="N-(5'-PHOSPHORIBOSYL)ANTHRANILATE ISOMERASE"/>
    <property type="match status" value="1"/>
</dbReference>
<dbReference type="Pfam" id="PF00697">
    <property type="entry name" value="PRAI"/>
    <property type="match status" value="1"/>
</dbReference>
<dbReference type="SUPFAM" id="SSF51366">
    <property type="entry name" value="Ribulose-phoshate binding barrel"/>
    <property type="match status" value="1"/>
</dbReference>
<reference key="1">
    <citation type="journal article" date="2005" name="Infect. Immun.">
        <title>Whole-genome analyses of speciation events in pathogenic Brucellae.</title>
        <authorList>
            <person name="Chain P.S."/>
            <person name="Comerci D.J."/>
            <person name="Tolmasky M.E."/>
            <person name="Larimer F.W."/>
            <person name="Malfatti S.A."/>
            <person name="Vergez L.M."/>
            <person name="Aguero F."/>
            <person name="Land M.L."/>
            <person name="Ugalde R.A."/>
            <person name="Garcia E."/>
        </authorList>
    </citation>
    <scope>NUCLEOTIDE SEQUENCE [LARGE SCALE GENOMIC DNA]</scope>
    <source>
        <strain>2308</strain>
    </source>
</reference>
<evidence type="ECO:0000255" key="1">
    <source>
        <dbReference type="HAMAP-Rule" id="MF_00135"/>
    </source>
</evidence>
<gene>
    <name evidence="1" type="primary">trpF</name>
    <name type="ordered locus">BAB1_2113</name>
</gene>
<protein>
    <recommendedName>
        <fullName evidence="1">N-(5'-phosphoribosyl)anthranilate isomerase</fullName>
        <shortName evidence="1">PRAI</shortName>
        <ecNumber evidence="1">5.3.1.24</ecNumber>
    </recommendedName>
</protein>
<sequence>MALDIKICGLKTPEAVAAALDGGATHIGFIFFPKSPRHITPDAAARLRAAATGRAVAVAVTVDADDEALDEIVKTVRPDMLQLHGGETPERVRFLKERYNLPVMKAFSIREAGDLEAIAPYRGIADRFLFDAKPPKGSELPGGNGISFDWNLLAALDADIDYMLSGGLNADNIAEALLKTGAPGIDISSGVECAPGEKDVRLIENFFQAVADANAQPFARRA</sequence>
<organism>
    <name type="scientific">Brucella abortus (strain 2308)</name>
    <dbReference type="NCBI Taxonomy" id="359391"/>
    <lineage>
        <taxon>Bacteria</taxon>
        <taxon>Pseudomonadati</taxon>
        <taxon>Pseudomonadota</taxon>
        <taxon>Alphaproteobacteria</taxon>
        <taxon>Hyphomicrobiales</taxon>
        <taxon>Brucellaceae</taxon>
        <taxon>Brucella/Ochrobactrum group</taxon>
        <taxon>Brucella</taxon>
    </lineage>
</organism>
<proteinExistence type="inferred from homology"/>
<comment type="catalytic activity">
    <reaction evidence="1">
        <text>N-(5-phospho-beta-D-ribosyl)anthranilate = 1-(2-carboxyphenylamino)-1-deoxy-D-ribulose 5-phosphate</text>
        <dbReference type="Rhea" id="RHEA:21540"/>
        <dbReference type="ChEBI" id="CHEBI:18277"/>
        <dbReference type="ChEBI" id="CHEBI:58613"/>
        <dbReference type="EC" id="5.3.1.24"/>
    </reaction>
</comment>
<comment type="pathway">
    <text evidence="1">Amino-acid biosynthesis; L-tryptophan biosynthesis; L-tryptophan from chorismate: step 3/5.</text>
</comment>
<comment type="similarity">
    <text evidence="1">Belongs to the TrpF family.</text>
</comment>
<name>TRPF_BRUA2</name>
<keyword id="KW-0028">Amino-acid biosynthesis</keyword>
<keyword id="KW-0057">Aromatic amino acid biosynthesis</keyword>
<keyword id="KW-0413">Isomerase</keyword>
<keyword id="KW-1185">Reference proteome</keyword>
<keyword id="KW-0822">Tryptophan biosynthesis</keyword>
<feature type="chain" id="PRO_1000018585" description="N-(5'-phosphoribosyl)anthranilate isomerase">
    <location>
        <begin position="1"/>
        <end position="222"/>
    </location>
</feature>